<gene>
    <name evidence="1" type="primary">rpmB</name>
    <name type="ordered locus">BCI_0179</name>
</gene>
<name>RL28_BAUCH</name>
<organism>
    <name type="scientific">Baumannia cicadellinicola subsp. Homalodisca coagulata</name>
    <dbReference type="NCBI Taxonomy" id="374463"/>
    <lineage>
        <taxon>Bacteria</taxon>
        <taxon>Pseudomonadati</taxon>
        <taxon>Pseudomonadota</taxon>
        <taxon>Gammaproteobacteria</taxon>
        <taxon>Candidatus Palibaumannia</taxon>
    </lineage>
</organism>
<protein>
    <recommendedName>
        <fullName evidence="1">Large ribosomal subunit protein bL28</fullName>
    </recommendedName>
    <alternativeName>
        <fullName evidence="2">50S ribosomal protein L28</fullName>
    </alternativeName>
</protein>
<keyword id="KW-1185">Reference proteome</keyword>
<keyword id="KW-0687">Ribonucleoprotein</keyword>
<keyword id="KW-0689">Ribosomal protein</keyword>
<comment type="similarity">
    <text evidence="1">Belongs to the bacterial ribosomal protein bL28 family.</text>
</comment>
<proteinExistence type="inferred from homology"/>
<accession>Q1LTS4</accession>
<evidence type="ECO:0000255" key="1">
    <source>
        <dbReference type="HAMAP-Rule" id="MF_00373"/>
    </source>
</evidence>
<evidence type="ECO:0000305" key="2"/>
<feature type="chain" id="PRO_1000007175" description="Large ribosomal subunit protein bL28">
    <location>
        <begin position="1"/>
        <end position="75"/>
    </location>
</feature>
<reference key="1">
    <citation type="journal article" date="2006" name="PLoS Biol.">
        <title>Metabolic complementarity and genomics of the dual bacterial symbiosis of sharpshooters.</title>
        <authorList>
            <person name="Wu D."/>
            <person name="Daugherty S.C."/>
            <person name="Van Aken S.E."/>
            <person name="Pai G.H."/>
            <person name="Watkins K.L."/>
            <person name="Khouri H."/>
            <person name="Tallon L.J."/>
            <person name="Zaborsky J.M."/>
            <person name="Dunbar H.E."/>
            <person name="Tran P.L."/>
            <person name="Moran N.A."/>
            <person name="Eisen J.A."/>
        </authorList>
    </citation>
    <scope>NUCLEOTIDE SEQUENCE [LARGE SCALE GENOMIC DNA]</scope>
</reference>
<dbReference type="EMBL" id="CP000238">
    <property type="protein sequence ID" value="ABF14020.1"/>
    <property type="molecule type" value="Genomic_DNA"/>
</dbReference>
<dbReference type="RefSeq" id="WP_011520373.1">
    <property type="nucleotide sequence ID" value="NC_007984.1"/>
</dbReference>
<dbReference type="SMR" id="Q1LTS4"/>
<dbReference type="STRING" id="374463.BCI_0179"/>
<dbReference type="KEGG" id="bci:BCI_0179"/>
<dbReference type="HOGENOM" id="CLU_064548_3_1_6"/>
<dbReference type="OrthoDB" id="9805609at2"/>
<dbReference type="Proteomes" id="UP000002427">
    <property type="component" value="Chromosome"/>
</dbReference>
<dbReference type="GO" id="GO:0022625">
    <property type="term" value="C:cytosolic large ribosomal subunit"/>
    <property type="evidence" value="ECO:0007669"/>
    <property type="project" value="TreeGrafter"/>
</dbReference>
<dbReference type="GO" id="GO:0003735">
    <property type="term" value="F:structural constituent of ribosome"/>
    <property type="evidence" value="ECO:0007669"/>
    <property type="project" value="InterPro"/>
</dbReference>
<dbReference type="GO" id="GO:0006412">
    <property type="term" value="P:translation"/>
    <property type="evidence" value="ECO:0007669"/>
    <property type="project" value="UniProtKB-UniRule"/>
</dbReference>
<dbReference type="FunFam" id="2.30.170.40:FF:000001">
    <property type="entry name" value="50S ribosomal protein L28"/>
    <property type="match status" value="1"/>
</dbReference>
<dbReference type="Gene3D" id="2.30.170.40">
    <property type="entry name" value="Ribosomal protein L28/L24"/>
    <property type="match status" value="1"/>
</dbReference>
<dbReference type="HAMAP" id="MF_00373">
    <property type="entry name" value="Ribosomal_bL28"/>
    <property type="match status" value="1"/>
</dbReference>
<dbReference type="InterPro" id="IPR026569">
    <property type="entry name" value="Ribosomal_bL28"/>
</dbReference>
<dbReference type="InterPro" id="IPR034704">
    <property type="entry name" value="Ribosomal_bL28/bL31-like_sf"/>
</dbReference>
<dbReference type="InterPro" id="IPR001383">
    <property type="entry name" value="Ribosomal_bL28_bact-type"/>
</dbReference>
<dbReference type="InterPro" id="IPR037147">
    <property type="entry name" value="Ribosomal_bL28_sf"/>
</dbReference>
<dbReference type="NCBIfam" id="TIGR00009">
    <property type="entry name" value="L28"/>
    <property type="match status" value="1"/>
</dbReference>
<dbReference type="PANTHER" id="PTHR13528">
    <property type="entry name" value="39S RIBOSOMAL PROTEIN L28, MITOCHONDRIAL"/>
    <property type="match status" value="1"/>
</dbReference>
<dbReference type="PANTHER" id="PTHR13528:SF2">
    <property type="entry name" value="LARGE RIBOSOMAL SUBUNIT PROTEIN BL28M"/>
    <property type="match status" value="1"/>
</dbReference>
<dbReference type="Pfam" id="PF00830">
    <property type="entry name" value="Ribosomal_L28"/>
    <property type="match status" value="1"/>
</dbReference>
<dbReference type="SUPFAM" id="SSF143800">
    <property type="entry name" value="L28p-like"/>
    <property type="match status" value="1"/>
</dbReference>
<sequence length="75" mass="8864">MSRFCQVTGKRSVSGNNRSYAMNATKRRFLPNLHFHRFWIEAEKRFIKIRVSAKGMRVIDKKGIENCLANLCIRY</sequence>